<feature type="chain" id="PRO_0000059939" description="General L-amino acid transport system permease protein AapQ">
    <location>
        <begin position="1"/>
        <end position="400"/>
    </location>
</feature>
<feature type="transmembrane region" description="Helical" evidence="1">
    <location>
        <begin position="29"/>
        <end position="49"/>
    </location>
</feature>
<feature type="transmembrane region" description="Helical" evidence="1">
    <location>
        <begin position="100"/>
        <end position="120"/>
    </location>
</feature>
<feature type="transmembrane region" description="Helical" evidence="1">
    <location>
        <begin position="142"/>
        <end position="162"/>
    </location>
</feature>
<feature type="transmembrane region" description="Helical" evidence="1">
    <location>
        <begin position="188"/>
        <end position="208"/>
    </location>
</feature>
<feature type="transmembrane region" description="Helical" evidence="1">
    <location>
        <begin position="225"/>
        <end position="245"/>
    </location>
</feature>
<feature type="transmembrane region" description="Helical" evidence="1">
    <location>
        <begin position="264"/>
        <end position="284"/>
    </location>
</feature>
<feature type="transmembrane region" description="Helical" evidence="1">
    <location>
        <begin position="340"/>
        <end position="360"/>
    </location>
</feature>
<feature type="transmembrane region" description="Helical" evidence="1">
    <location>
        <begin position="367"/>
        <end position="387"/>
    </location>
</feature>
<feature type="domain" description="ABC transmembrane type-1" evidence="1">
    <location>
        <begin position="96"/>
        <end position="388"/>
    </location>
</feature>
<keyword id="KW-0029">Amino-acid transport</keyword>
<keyword id="KW-0997">Cell inner membrane</keyword>
<keyword id="KW-1003">Cell membrane</keyword>
<keyword id="KW-0472">Membrane</keyword>
<keyword id="KW-0812">Transmembrane</keyword>
<keyword id="KW-1133">Transmembrane helix</keyword>
<keyword id="KW-0813">Transport</keyword>
<name>AAPQ_RHIJ3</name>
<proteinExistence type="inferred from homology"/>
<dbReference type="EMBL" id="X82596">
    <property type="protein sequence ID" value="CAA57934.1"/>
    <property type="molecule type" value="Genomic_DNA"/>
</dbReference>
<dbReference type="EMBL" id="AM236080">
    <property type="protein sequence ID" value="CAK07695.1"/>
    <property type="molecule type" value="Genomic_DNA"/>
</dbReference>
<dbReference type="RefSeq" id="WP_011651800.1">
    <property type="nucleotide sequence ID" value="NC_008380.1"/>
</dbReference>
<dbReference type="TCDB" id="3.A.1.3.8">
    <property type="family name" value="the atp-binding cassette (abc) superfamily"/>
</dbReference>
<dbReference type="EnsemblBacteria" id="CAK07695">
    <property type="protein sequence ID" value="CAK07695"/>
    <property type="gene ID" value="RL2203"/>
</dbReference>
<dbReference type="KEGG" id="rle:RL2203"/>
<dbReference type="eggNOG" id="COG4597">
    <property type="taxonomic scope" value="Bacteria"/>
</dbReference>
<dbReference type="HOGENOM" id="CLU_019602_8_0_5"/>
<dbReference type="Proteomes" id="UP000006575">
    <property type="component" value="Chromosome"/>
</dbReference>
<dbReference type="GO" id="GO:0043190">
    <property type="term" value="C:ATP-binding cassette (ABC) transporter complex"/>
    <property type="evidence" value="ECO:0007669"/>
    <property type="project" value="InterPro"/>
</dbReference>
<dbReference type="GO" id="GO:0022857">
    <property type="term" value="F:transmembrane transporter activity"/>
    <property type="evidence" value="ECO:0007669"/>
    <property type="project" value="InterPro"/>
</dbReference>
<dbReference type="GO" id="GO:0006865">
    <property type="term" value="P:amino acid transport"/>
    <property type="evidence" value="ECO:0007669"/>
    <property type="project" value="UniProtKB-KW"/>
</dbReference>
<dbReference type="CDD" id="cd06261">
    <property type="entry name" value="TM_PBP2"/>
    <property type="match status" value="1"/>
</dbReference>
<dbReference type="Gene3D" id="1.10.3720.10">
    <property type="entry name" value="MetI-like"/>
    <property type="match status" value="2"/>
</dbReference>
<dbReference type="InterPro" id="IPR010065">
    <property type="entry name" value="AA_ABC_transptr_permease_3TM"/>
</dbReference>
<dbReference type="InterPro" id="IPR043429">
    <property type="entry name" value="ArtM/GltK/GlnP/TcyL/YhdX-like"/>
</dbReference>
<dbReference type="InterPro" id="IPR000515">
    <property type="entry name" value="MetI-like"/>
</dbReference>
<dbReference type="InterPro" id="IPR035906">
    <property type="entry name" value="MetI-like_sf"/>
</dbReference>
<dbReference type="NCBIfam" id="TIGR01726">
    <property type="entry name" value="HEQRo_perm_3TM"/>
    <property type="match status" value="1"/>
</dbReference>
<dbReference type="PANTHER" id="PTHR30614:SF37">
    <property type="entry name" value="AMINO-ACID ABC TRANSPORTER PERMEASE PROTEIN YHDX-RELATED"/>
    <property type="match status" value="1"/>
</dbReference>
<dbReference type="PANTHER" id="PTHR30614">
    <property type="entry name" value="MEMBRANE COMPONENT OF AMINO ACID ABC TRANSPORTER"/>
    <property type="match status" value="1"/>
</dbReference>
<dbReference type="Pfam" id="PF00528">
    <property type="entry name" value="BPD_transp_1"/>
    <property type="match status" value="1"/>
</dbReference>
<dbReference type="SUPFAM" id="SSF161098">
    <property type="entry name" value="MetI-like"/>
    <property type="match status" value="2"/>
</dbReference>
<dbReference type="PROSITE" id="PS50928">
    <property type="entry name" value="ABC_TM1"/>
    <property type="match status" value="1"/>
</dbReference>
<protein>
    <recommendedName>
        <fullName>General L-amino acid transport system permease protein AapQ</fullName>
    </recommendedName>
</protein>
<accession>Q52813</accession>
<accession>Q1MH72</accession>
<sequence>MTHEAVDTTPLHGTGWSFRSAMYDPKYRSIFYQILTIVILVGFVWWVAHNTAVNLARSNTASGFGFLRGRAGFEIGQSLITFSSDSTYARALLVGILNTLLVAVTGIFTATIIGFLIGIGRLSRNWLIAKLCTVYVEVFRNIPPLLVIFFWYLGVLSVLPQPRESVGLPFSMYLNNRGLAFPKPIFDTGMIAVGIALVIAIVASIIIARWAHKRQAATGQPFHTVWTAIALIVGLPLLVFVVSGFPLTFDVPVAGKFNLTGGSVVGPEFMSLFLALSFYTASFIAEIVRGGIRGVPKGQSEAAGALGLHPSSVTRLVVVPQALRIIIPPLTSQYLNLTKNSSLAIAIGFSDLVAVGGTILNQSGQAIEIVCIWGIVYLSLSILTSLFMNWFNAKMALVER</sequence>
<evidence type="ECO:0000255" key="1">
    <source>
        <dbReference type="PROSITE-ProRule" id="PRU00441"/>
    </source>
</evidence>
<evidence type="ECO:0000305" key="2"/>
<reference key="1">
    <citation type="journal article" date="1996" name="Mol. Microbiol.">
        <title>The general L-amino acid permease of Rhizobium leguminosarum is an ABC uptake system that also influences efflux of solutes.</title>
        <authorList>
            <person name="Walshaw D.L."/>
            <person name="Poole P.S."/>
        </authorList>
    </citation>
    <scope>NUCLEOTIDE SEQUENCE [GENOMIC DNA]</scope>
</reference>
<reference key="2">
    <citation type="journal article" date="2006" name="Genome Biol.">
        <title>The genome of Rhizobium leguminosarum has recognizable core and accessory components.</title>
        <authorList>
            <person name="Young J.P.W."/>
            <person name="Crossman L.C."/>
            <person name="Johnston A.W.B."/>
            <person name="Thomson N.R."/>
            <person name="Ghazoui Z.F."/>
            <person name="Hull K.H."/>
            <person name="Wexler M."/>
            <person name="Curson A.R.J."/>
            <person name="Todd J.D."/>
            <person name="Poole P.S."/>
            <person name="Mauchline T.H."/>
            <person name="East A.K."/>
            <person name="Quail M.A."/>
            <person name="Churcher C."/>
            <person name="Arrowsmith C."/>
            <person name="Cherevach I."/>
            <person name="Chillingworth T."/>
            <person name="Clarke K."/>
            <person name="Cronin A."/>
            <person name="Davis P."/>
            <person name="Fraser A."/>
            <person name="Hance Z."/>
            <person name="Hauser H."/>
            <person name="Jagels K."/>
            <person name="Moule S."/>
            <person name="Mungall K."/>
            <person name="Norbertczak H."/>
            <person name="Rabbinowitsch E."/>
            <person name="Sanders M."/>
            <person name="Simmonds M."/>
            <person name="Whitehead S."/>
            <person name="Parkhill J."/>
        </authorList>
    </citation>
    <scope>NUCLEOTIDE SEQUENCE [LARGE SCALE GENOMIC DNA]</scope>
    <source>
        <strain>DSM 114642 / LMG 32736 / 3841</strain>
    </source>
</reference>
<comment type="function">
    <text>Part of a binding-protein-dependent transport system for L-amino acids, affects the uptake as well as efflux of these amino acids. Probably responsible for the translocation of the substrate across the membrane.</text>
</comment>
<comment type="subcellular location">
    <subcellularLocation>
        <location evidence="2">Cell inner membrane</location>
        <topology evidence="2">Multi-pass membrane protein</topology>
    </subcellularLocation>
</comment>
<comment type="similarity">
    <text evidence="2">Belongs to the binding-protein-dependent transport system permease family. HisMQ subfamily.</text>
</comment>
<gene>
    <name type="primary">aapQ</name>
    <name type="ordered locus">RL2203</name>
</gene>
<organism>
    <name type="scientific">Rhizobium johnstonii (strain DSM 114642 / LMG 32736 / 3841)</name>
    <name type="common">Rhizobium leguminosarum bv. viciae</name>
    <dbReference type="NCBI Taxonomy" id="216596"/>
    <lineage>
        <taxon>Bacteria</taxon>
        <taxon>Pseudomonadati</taxon>
        <taxon>Pseudomonadota</taxon>
        <taxon>Alphaproteobacteria</taxon>
        <taxon>Hyphomicrobiales</taxon>
        <taxon>Rhizobiaceae</taxon>
        <taxon>Rhizobium/Agrobacterium group</taxon>
        <taxon>Rhizobium</taxon>
        <taxon>Rhizobium johnstonii</taxon>
    </lineage>
</organism>